<organism>
    <name type="scientific">Aspergillus flavus</name>
    <dbReference type="NCBI Taxonomy" id="5059"/>
    <lineage>
        <taxon>Eukaryota</taxon>
        <taxon>Fungi</taxon>
        <taxon>Dikarya</taxon>
        <taxon>Ascomycota</taxon>
        <taxon>Pezizomycotina</taxon>
        <taxon>Eurotiomycetes</taxon>
        <taxon>Eurotiomycetidae</taxon>
        <taxon>Eurotiales</taxon>
        <taxon>Aspergillaceae</taxon>
        <taxon>Aspergillus</taxon>
        <taxon>Aspergillus subgen. Circumdati</taxon>
    </lineage>
</organism>
<protein>
    <recommendedName>
        <fullName>Neutral protease 2 homolog mep20</fullName>
        <ecNumber>3.4.24.39</ecNumber>
    </recommendedName>
    <alternativeName>
        <fullName>Deuterolysin mep20</fullName>
    </alternativeName>
</protein>
<keyword id="KW-0165">Cleavage on pair of basic residues</keyword>
<keyword id="KW-0903">Direct protein sequencing</keyword>
<keyword id="KW-1015">Disulfide bond</keyword>
<keyword id="KW-0378">Hydrolase</keyword>
<keyword id="KW-0479">Metal-binding</keyword>
<keyword id="KW-0482">Metalloprotease</keyword>
<keyword id="KW-0645">Protease</keyword>
<keyword id="KW-0732">Signal</keyword>
<keyword id="KW-0862">Zinc</keyword>
<keyword id="KW-0865">Zymogen</keyword>
<feature type="signal peptide" evidence="2">
    <location>
        <begin position="1"/>
        <end position="19"/>
    </location>
</feature>
<feature type="propeptide" id="PRO_0000029236">
    <location>
        <begin position="20"/>
        <end position="193"/>
    </location>
</feature>
<feature type="chain" id="PRO_0000029237" description="Neutral protease 2 homolog mep20">
    <location>
        <begin position="194"/>
        <end position="381"/>
    </location>
</feature>
<feature type="active site" evidence="3">
    <location>
        <position position="322"/>
    </location>
</feature>
<feature type="binding site" evidence="3">
    <location>
        <position position="321"/>
    </location>
    <ligand>
        <name>Zn(2+)</name>
        <dbReference type="ChEBI" id="CHEBI:29105"/>
        <note>catalytic</note>
    </ligand>
</feature>
<feature type="binding site" evidence="3">
    <location>
        <position position="325"/>
    </location>
    <ligand>
        <name>Zn(2+)</name>
        <dbReference type="ChEBI" id="CHEBI:29105"/>
        <note>catalytic</note>
    </ligand>
</feature>
<feature type="binding site" evidence="3">
    <location>
        <position position="336"/>
    </location>
    <ligand>
        <name>Zn(2+)</name>
        <dbReference type="ChEBI" id="CHEBI:29105"/>
        <note>catalytic</note>
    </ligand>
</feature>
<feature type="disulfide bond" evidence="1">
    <location>
        <begin position="199"/>
        <end position="271"/>
    </location>
</feature>
<feature type="disulfide bond" evidence="1">
    <location>
        <begin position="278"/>
        <end position="296"/>
    </location>
</feature>
<evidence type="ECO:0000250" key="1"/>
<evidence type="ECO:0000255" key="2"/>
<evidence type="ECO:0000255" key="3">
    <source>
        <dbReference type="PROSITE-ProRule" id="PRU10095"/>
    </source>
</evidence>
<evidence type="ECO:0000305" key="4"/>
<reference key="1">
    <citation type="journal article" date="1995" name="Gene">
        <title>Cloning and characterization of the cDNAs and genes (mep20) encoding homologous metalloproteinases from Aspergillus flavus and A. fumigatus.</title>
        <authorList>
            <person name="Ramesh M.V."/>
            <person name="Sirakova T.D."/>
            <person name="Kolattukudy P.E."/>
        </authorList>
    </citation>
    <scope>NUCLEOTIDE SEQUENCE [GENOMIC DNA]</scope>
    <scope>PARTIAL PROTEIN SEQUENCE</scope>
    <source>
        <strain>Isolate 28</strain>
    </source>
</reference>
<accession>P46073</accession>
<gene>
    <name type="primary">mep20</name>
</gene>
<proteinExistence type="evidence at protein level"/>
<comment type="function">
    <text evidence="1">Secreted metalloproteinase that allows assimilation of proteinaceous substrates. Shows high activities on basic nuclear substrates such as histone and protamine (By similarity).</text>
</comment>
<comment type="catalytic activity">
    <reaction>
        <text>Preferential cleavage of bonds with hydrophobic residues in P1'. Also 3-Asn-|-Gln-4 and 8-Gly-|-Ser-9 bonds in insulin B chain.</text>
        <dbReference type="EC" id="3.4.24.39"/>
    </reaction>
</comment>
<comment type="cofactor">
    <cofactor evidence="1">
        <name>Zn(2+)</name>
        <dbReference type="ChEBI" id="CHEBI:29105"/>
    </cofactor>
    <text evidence="1">Binds 1 zinc ion per subunit.</text>
</comment>
<comment type="similarity">
    <text evidence="4">Belongs to the peptidase M35 family.</text>
</comment>
<dbReference type="EC" id="3.4.24.39"/>
<dbReference type="EMBL" id="L37524">
    <property type="protein sequence ID" value="AAA96712.1"/>
    <property type="molecule type" value="Genomic_DNA"/>
</dbReference>
<dbReference type="PIR" id="JC4378">
    <property type="entry name" value="JC4378"/>
</dbReference>
<dbReference type="SMR" id="P46073"/>
<dbReference type="MEROPS" id="M35.002"/>
<dbReference type="VEuPathDB" id="FungiDB:AFLA_008474"/>
<dbReference type="VEuPathDB" id="FungiDB:F9C07_2285744"/>
<dbReference type="GO" id="GO:0046872">
    <property type="term" value="F:metal ion binding"/>
    <property type="evidence" value="ECO:0007669"/>
    <property type="project" value="UniProtKB-KW"/>
</dbReference>
<dbReference type="GO" id="GO:0004222">
    <property type="term" value="F:metalloendopeptidase activity"/>
    <property type="evidence" value="ECO:0007669"/>
    <property type="project" value="InterPro"/>
</dbReference>
<dbReference type="GO" id="GO:0006508">
    <property type="term" value="P:proteolysis"/>
    <property type="evidence" value="ECO:0007669"/>
    <property type="project" value="UniProtKB-KW"/>
</dbReference>
<dbReference type="CDD" id="cd11008">
    <property type="entry name" value="M35_deuterolysin_like"/>
    <property type="match status" value="1"/>
</dbReference>
<dbReference type="Gene3D" id="2.60.40.2970">
    <property type="match status" value="1"/>
</dbReference>
<dbReference type="Gene3D" id="3.40.390.10">
    <property type="entry name" value="Collagenase (Catalytic Domain)"/>
    <property type="match status" value="1"/>
</dbReference>
<dbReference type="InterPro" id="IPR050414">
    <property type="entry name" value="Fungal_M35_metalloproteases"/>
</dbReference>
<dbReference type="InterPro" id="IPR024079">
    <property type="entry name" value="MetalloPept_cat_dom_sf"/>
</dbReference>
<dbReference type="InterPro" id="IPR001384">
    <property type="entry name" value="Peptidase_M35"/>
</dbReference>
<dbReference type="PANTHER" id="PTHR37016">
    <property type="match status" value="1"/>
</dbReference>
<dbReference type="PANTHER" id="PTHR37016:SF3">
    <property type="entry name" value="NEUTRAL PROTEASE 2-RELATED"/>
    <property type="match status" value="1"/>
</dbReference>
<dbReference type="Pfam" id="PF02102">
    <property type="entry name" value="Peptidase_M35"/>
    <property type="match status" value="1"/>
</dbReference>
<dbReference type="PRINTS" id="PR00768">
    <property type="entry name" value="DEUTEROLYSIN"/>
</dbReference>
<dbReference type="SUPFAM" id="SSF55486">
    <property type="entry name" value="Metalloproteases ('zincins'), catalytic domain"/>
    <property type="match status" value="1"/>
</dbReference>
<dbReference type="PROSITE" id="PS00142">
    <property type="entry name" value="ZINC_PROTEASE"/>
    <property type="match status" value="1"/>
</dbReference>
<name>MEP20_ASPFL</name>
<sequence>MRFTALASAILPLACNVLALPAKTGEAPKLDVSLSQVDNTLIKAVVKNTGSEDITFVHLNFFRDKAPVKKVSLFRQRYVIPLHPHFPALTSVIQPTELPFQGIKQRFRTEGLTEDALTVLAPGESIEDEFDIAATSDLSEGGSITISTDGFVPIATGNKITGSVPYSSNELSIEVDAAQAASVASAVKPLDKRTKVASCSGTRSSALSTALKNTVSLANQAASAAQSGSSSRFQEYFKTTSSSVRTSVAARFRAVASEASSTSSGSTTYYCTDTYGYCSSNVPGVHLPAYNIIANCDIYYTYLSALTRTCHAQDQATTTLHEFTHAPGVYSPGTDDLGYGYDAATALSSSQALNNVDTYALFANGKFLLSREVDVKYLHTT</sequence>